<name>CFD1_ASPOR</name>
<dbReference type="EMBL" id="BA000052">
    <property type="protein sequence ID" value="BAE61588.1"/>
    <property type="molecule type" value="Genomic_DNA"/>
</dbReference>
<dbReference type="RefSeq" id="XP_001822721.1">
    <property type="nucleotide sequence ID" value="XM_001822669.1"/>
</dbReference>
<dbReference type="SMR" id="Q2UA27"/>
<dbReference type="STRING" id="510516.Q2UA27"/>
<dbReference type="EnsemblFungi" id="BAE61588">
    <property type="protein sequence ID" value="BAE61588"/>
    <property type="gene ID" value="AO090102000570"/>
</dbReference>
<dbReference type="GeneID" id="5994766"/>
<dbReference type="KEGG" id="aor:AO090102000570"/>
<dbReference type="VEuPathDB" id="FungiDB:AO090102000570"/>
<dbReference type="HOGENOM" id="CLU_024839_0_1_1"/>
<dbReference type="OMA" id="WIPVFAD"/>
<dbReference type="OrthoDB" id="106817at5052"/>
<dbReference type="Proteomes" id="UP000006564">
    <property type="component" value="Chromosome 4"/>
</dbReference>
<dbReference type="GO" id="GO:1904564">
    <property type="term" value="C:cytosolic [4Fe-4S] assembly scaffold complex"/>
    <property type="evidence" value="ECO:0007669"/>
    <property type="project" value="EnsemblFungi"/>
</dbReference>
<dbReference type="GO" id="GO:0051539">
    <property type="term" value="F:4 iron, 4 sulfur cluster binding"/>
    <property type="evidence" value="ECO:0007669"/>
    <property type="project" value="UniProtKB-UniRule"/>
</dbReference>
<dbReference type="GO" id="GO:0005524">
    <property type="term" value="F:ATP binding"/>
    <property type="evidence" value="ECO:0007669"/>
    <property type="project" value="UniProtKB-KW"/>
</dbReference>
<dbReference type="GO" id="GO:0016887">
    <property type="term" value="F:ATP hydrolysis activity"/>
    <property type="evidence" value="ECO:0007669"/>
    <property type="project" value="EnsemblFungi"/>
</dbReference>
<dbReference type="GO" id="GO:0140663">
    <property type="term" value="F:ATP-dependent FeS chaperone activity"/>
    <property type="evidence" value="ECO:0007669"/>
    <property type="project" value="InterPro"/>
</dbReference>
<dbReference type="GO" id="GO:0046872">
    <property type="term" value="F:metal ion binding"/>
    <property type="evidence" value="ECO:0007669"/>
    <property type="project" value="UniProtKB-KW"/>
</dbReference>
<dbReference type="GO" id="GO:0016226">
    <property type="term" value="P:iron-sulfur cluster assembly"/>
    <property type="evidence" value="ECO:0007669"/>
    <property type="project" value="UniProtKB-UniRule"/>
</dbReference>
<dbReference type="GO" id="GO:0002098">
    <property type="term" value="P:tRNA wobble uridine modification"/>
    <property type="evidence" value="ECO:0007669"/>
    <property type="project" value="EnsemblFungi"/>
</dbReference>
<dbReference type="CDD" id="cd02037">
    <property type="entry name" value="Mrp_NBP35"/>
    <property type="match status" value="1"/>
</dbReference>
<dbReference type="FunFam" id="3.40.50.300:FF:001300">
    <property type="entry name" value="Cytosolic Fe-S cluster assembly factor CFD1"/>
    <property type="match status" value="1"/>
</dbReference>
<dbReference type="Gene3D" id="3.40.50.300">
    <property type="entry name" value="P-loop containing nucleotide triphosphate hydrolases"/>
    <property type="match status" value="1"/>
</dbReference>
<dbReference type="HAMAP" id="MF_02040">
    <property type="entry name" value="Mrp_NBP35"/>
    <property type="match status" value="1"/>
</dbReference>
<dbReference type="HAMAP" id="MF_03039">
    <property type="entry name" value="NUBP2"/>
    <property type="match status" value="1"/>
</dbReference>
<dbReference type="InterPro" id="IPR019591">
    <property type="entry name" value="Mrp/NBP35_ATP-bd"/>
</dbReference>
<dbReference type="InterPro" id="IPR028600">
    <property type="entry name" value="NUBP2/Cfd1_eukaryotes"/>
</dbReference>
<dbReference type="InterPro" id="IPR027417">
    <property type="entry name" value="P-loop_NTPase"/>
</dbReference>
<dbReference type="InterPro" id="IPR033756">
    <property type="entry name" value="YlxH/NBP35"/>
</dbReference>
<dbReference type="PANTHER" id="PTHR23264:SF19">
    <property type="entry name" value="CYTOSOLIC FE-S CLUSTER ASSEMBLY FACTOR NUBP2"/>
    <property type="match status" value="1"/>
</dbReference>
<dbReference type="PANTHER" id="PTHR23264">
    <property type="entry name" value="NUCLEOTIDE-BINDING PROTEIN NBP35 YEAST -RELATED"/>
    <property type="match status" value="1"/>
</dbReference>
<dbReference type="Pfam" id="PF10609">
    <property type="entry name" value="ParA"/>
    <property type="match status" value="1"/>
</dbReference>
<dbReference type="SUPFAM" id="SSF52540">
    <property type="entry name" value="P-loop containing nucleoside triphosphate hydrolases"/>
    <property type="match status" value="1"/>
</dbReference>
<reference key="1">
    <citation type="journal article" date="2005" name="Nature">
        <title>Genome sequencing and analysis of Aspergillus oryzae.</title>
        <authorList>
            <person name="Machida M."/>
            <person name="Asai K."/>
            <person name="Sano M."/>
            <person name="Tanaka T."/>
            <person name="Kumagai T."/>
            <person name="Terai G."/>
            <person name="Kusumoto K."/>
            <person name="Arima T."/>
            <person name="Akita O."/>
            <person name="Kashiwagi Y."/>
            <person name="Abe K."/>
            <person name="Gomi K."/>
            <person name="Horiuchi H."/>
            <person name="Kitamoto K."/>
            <person name="Kobayashi T."/>
            <person name="Takeuchi M."/>
            <person name="Denning D.W."/>
            <person name="Galagan J.E."/>
            <person name="Nierman W.C."/>
            <person name="Yu J."/>
            <person name="Archer D.B."/>
            <person name="Bennett J.W."/>
            <person name="Bhatnagar D."/>
            <person name="Cleveland T.E."/>
            <person name="Fedorova N.D."/>
            <person name="Gotoh O."/>
            <person name="Horikawa H."/>
            <person name="Hosoyama A."/>
            <person name="Ichinomiya M."/>
            <person name="Igarashi R."/>
            <person name="Iwashita K."/>
            <person name="Juvvadi P.R."/>
            <person name="Kato M."/>
            <person name="Kato Y."/>
            <person name="Kin T."/>
            <person name="Kokubun A."/>
            <person name="Maeda H."/>
            <person name="Maeyama N."/>
            <person name="Maruyama J."/>
            <person name="Nagasaki H."/>
            <person name="Nakajima T."/>
            <person name="Oda K."/>
            <person name="Okada K."/>
            <person name="Paulsen I."/>
            <person name="Sakamoto K."/>
            <person name="Sawano T."/>
            <person name="Takahashi M."/>
            <person name="Takase K."/>
            <person name="Terabayashi Y."/>
            <person name="Wortman J.R."/>
            <person name="Yamada O."/>
            <person name="Yamagata Y."/>
            <person name="Anazawa H."/>
            <person name="Hata Y."/>
            <person name="Koide Y."/>
            <person name="Komori T."/>
            <person name="Koyama Y."/>
            <person name="Minetoki T."/>
            <person name="Suharnan S."/>
            <person name="Tanaka A."/>
            <person name="Isono K."/>
            <person name="Kuhara S."/>
            <person name="Ogasawara N."/>
            <person name="Kikuchi H."/>
        </authorList>
    </citation>
    <scope>NUCLEOTIDE SEQUENCE [LARGE SCALE GENOMIC DNA]</scope>
    <source>
        <strain>ATCC 42149 / RIB 40</strain>
    </source>
</reference>
<protein>
    <recommendedName>
        <fullName evidence="1">Cytosolic Fe-S cluster assembly factor cfd1</fullName>
    </recommendedName>
    <alternativeName>
        <fullName evidence="1">Cytosolic Fe-S cluster-deficient protein 1</fullName>
    </alternativeName>
</protein>
<organism>
    <name type="scientific">Aspergillus oryzae (strain ATCC 42149 / RIB 40)</name>
    <name type="common">Yellow koji mold</name>
    <dbReference type="NCBI Taxonomy" id="510516"/>
    <lineage>
        <taxon>Eukaryota</taxon>
        <taxon>Fungi</taxon>
        <taxon>Dikarya</taxon>
        <taxon>Ascomycota</taxon>
        <taxon>Pezizomycotina</taxon>
        <taxon>Eurotiomycetes</taxon>
        <taxon>Eurotiomycetidae</taxon>
        <taxon>Eurotiales</taxon>
        <taxon>Aspergillaceae</taxon>
        <taxon>Aspergillus</taxon>
        <taxon>Aspergillus subgen. Circumdati</taxon>
    </lineage>
</organism>
<proteinExistence type="inferred from homology"/>
<keyword id="KW-0004">4Fe-4S</keyword>
<keyword id="KW-0067">ATP-binding</keyword>
<keyword id="KW-0963">Cytoplasm</keyword>
<keyword id="KW-0408">Iron</keyword>
<keyword id="KW-0411">Iron-sulfur</keyword>
<keyword id="KW-0479">Metal-binding</keyword>
<keyword id="KW-0547">Nucleotide-binding</keyword>
<keyword id="KW-1185">Reference proteome</keyword>
<sequence length="315" mass="33688">MPLDGVKNIVLVLSGKGGVGKSSVTLQLALALTLQGKSVGILDIDLTGPSIPRLVGLEDAKITQAPGGWVPVTVHPASTNDGAQRGSLRCMSLGFLLRDRGDAVIWRGPKKTAMIRQFLSDVYWGETDYLLVDTPPGTSDEHIALAEQLLRPATTNPAAGSSTMPRLAGAVLVTTPQAVATSDVRKEVNFCVKTQIPMLGVIENMSGYTCPCCGEVTNLFSSGGGQVMAQETGVKFLGAVPVDIQFGELVEGKVVDESDDESEDGAQPEQKREQKQDEVVDERPLVERYKDCWSYSRFEGFADTLLSEIEGGVAY</sequence>
<gene>
    <name type="primary">cfd1</name>
    <name type="ORF">AO090102000570</name>
</gene>
<comment type="function">
    <text evidence="1">Component of the cytosolic iron-sulfur (Fe/S) protein assembly (CIA) machinery. Required for maturation of extramitochondrial Fe-S proteins. The nbp35-cfd1 heterotetramer forms a Fe-S scaffold complex, mediating the de novo assembly of an Fe-S cluster and its transfer to target apoproteins.</text>
</comment>
<comment type="cofactor">
    <cofactor evidence="1">
        <name>[4Fe-4S] cluster</name>
        <dbReference type="ChEBI" id="CHEBI:49883"/>
    </cofactor>
    <text evidence="1">Binds 4 [4Fe-4S] clusters per heterotetramer. Contains two stable clusters in the N-termini of nbp35 and two labile, bridging clusters between subunits of the nbp35-cfd1 heterotetramer.</text>
</comment>
<comment type="subunit">
    <text evidence="1">Heterotetramer of 2 nbp35 and 2 cfd1 chains.</text>
</comment>
<comment type="subcellular location">
    <subcellularLocation>
        <location evidence="1">Cytoplasm</location>
    </subcellularLocation>
</comment>
<comment type="similarity">
    <text evidence="1">Belongs to the Mrp/NBP35 ATP-binding proteins family. NUBP2/CFD1 subfamily.</text>
</comment>
<feature type="chain" id="PRO_0000278871" description="Cytosolic Fe-S cluster assembly factor cfd1">
    <location>
        <begin position="1"/>
        <end position="315"/>
    </location>
</feature>
<feature type="region of interest" description="Disordered" evidence="2">
    <location>
        <begin position="253"/>
        <end position="282"/>
    </location>
</feature>
<feature type="compositionally biased region" description="Acidic residues" evidence="2">
    <location>
        <begin position="257"/>
        <end position="266"/>
    </location>
</feature>
<feature type="compositionally biased region" description="Basic and acidic residues" evidence="2">
    <location>
        <begin position="269"/>
        <end position="282"/>
    </location>
</feature>
<feature type="binding site" evidence="1">
    <location>
        <begin position="15"/>
        <end position="22"/>
    </location>
    <ligand>
        <name>ATP</name>
        <dbReference type="ChEBI" id="CHEBI:30616"/>
    </ligand>
</feature>
<feature type="binding site" evidence="1">
    <location>
        <position position="210"/>
    </location>
    <ligand>
        <name>[4Fe-4S] cluster</name>
        <dbReference type="ChEBI" id="CHEBI:49883"/>
        <note>ligand shared between dimeric partners</note>
    </ligand>
</feature>
<feature type="binding site" evidence="1">
    <location>
        <position position="213"/>
    </location>
    <ligand>
        <name>[4Fe-4S] cluster</name>
        <dbReference type="ChEBI" id="CHEBI:49883"/>
        <note>ligand shared between dimeric partners</note>
    </ligand>
</feature>
<accession>Q2UA27</accession>
<evidence type="ECO:0000255" key="1">
    <source>
        <dbReference type="HAMAP-Rule" id="MF_03039"/>
    </source>
</evidence>
<evidence type="ECO:0000256" key="2">
    <source>
        <dbReference type="SAM" id="MobiDB-lite"/>
    </source>
</evidence>